<gene>
    <name type="primary">SPAG16</name>
    <name type="synonym">PF20</name>
</gene>
<proteinExistence type="evidence at protein level"/>
<keyword id="KW-0025">Alternative splicing</keyword>
<keyword id="KW-0966">Cell projection</keyword>
<keyword id="KW-0969">Cilium</keyword>
<keyword id="KW-0970">Cilium biogenesis/degradation</keyword>
<keyword id="KW-0175">Coiled coil</keyword>
<keyword id="KW-0963">Cytoplasm</keyword>
<keyword id="KW-0206">Cytoskeleton</keyword>
<keyword id="KW-0282">Flagellum</keyword>
<keyword id="KW-0597">Phosphoprotein</keyword>
<keyword id="KW-1267">Proteomics identification</keyword>
<keyword id="KW-1185">Reference proteome</keyword>
<keyword id="KW-0677">Repeat</keyword>
<keyword id="KW-0853">WD repeat</keyword>
<sequence length="631" mass="70818">MAAQRGMPSSAVRVLEEALGMGLTAAGDARDTADAVAAEGAYYLEQVTITEASEDDYEYEEIPDDNFSIPEGEEDLAKAIQMAQEQATDTEILERKTVLPSKHAVPEVIEDFLCNFLIKMGMTRTLDCFQSEWYELIQKGVTELRTVGNVPDVYTQIMLLENENKNLKKDLKHYKQAADKAREDLLKIQKERDFHRMHHKRIVQEKNKLINDLKGLKLHYASYEPTIRVLHEKHHTLLKEKMLTSLERDKVVGQISGLQETLKKLQRGHSYHGPQIKVDHSREKENAPEGPTQKGLREAREQNKCKTKMKGNTKDSEFPIDMQPNPNLNVSKESLSPAKFDYKLKNIFRLHELPVSCVSMQPHKDILVSCGEDRLWKVLGLPKCNVLLTGFGHTDWLSDCCFHPSGDKLATSSGDTTVKLWDLCKGDCILTFEGHSRAVWSCTWHSCGNFVASSSLDKTSKIWDVNSERCRCTLYGHTDSVNSIEFFPFSNTLLTSSADKTLSIWDARTGICEQSLYGHMHSINDAIFDPRGHMIASCDACGVTKLWDFRKLLPIVSIDIGPSPGNEVNFDSSGRVLAQASGNGVIHLLDLKSGEIHKLMGHENEAHTVVFSHDGEILFSGGSDGTVRTWS</sequence>
<feature type="chain" id="PRO_0000051223" description="Sperm-associated antigen 16 protein">
    <location>
        <begin position="1"/>
        <end position="631"/>
    </location>
</feature>
<feature type="repeat" description="WD 1">
    <location>
        <begin position="350"/>
        <end position="389"/>
    </location>
</feature>
<feature type="repeat" description="WD 2">
    <location>
        <begin position="392"/>
        <end position="431"/>
    </location>
</feature>
<feature type="repeat" description="WD 3">
    <location>
        <begin position="434"/>
        <end position="473"/>
    </location>
</feature>
<feature type="repeat" description="WD 4">
    <location>
        <begin position="476"/>
        <end position="515"/>
    </location>
</feature>
<feature type="repeat" description="WD 5">
    <location>
        <begin position="518"/>
        <end position="557"/>
    </location>
</feature>
<feature type="repeat" description="WD 6">
    <location>
        <begin position="560"/>
        <end position="600"/>
    </location>
</feature>
<feature type="repeat" description="WD 7">
    <location>
        <begin position="601"/>
        <end position="630"/>
    </location>
</feature>
<feature type="region of interest" description="Disordered" evidence="4">
    <location>
        <begin position="266"/>
        <end position="332"/>
    </location>
</feature>
<feature type="coiled-coil region" evidence="3">
    <location>
        <begin position="152"/>
        <end position="267"/>
    </location>
</feature>
<feature type="compositionally biased region" description="Basic and acidic residues" evidence="4">
    <location>
        <begin position="277"/>
        <end position="287"/>
    </location>
</feature>
<feature type="compositionally biased region" description="Basic and acidic residues" evidence="4">
    <location>
        <begin position="295"/>
        <end position="304"/>
    </location>
</feature>
<feature type="splice variant" id="VSP_013494" description="In isoform 2." evidence="10">
    <location>
        <begin position="1"/>
        <end position="149"/>
    </location>
</feature>
<feature type="splice variant" id="VSP_013493" description="In isoform 3." evidence="8">
    <original>MAAQRGMPSSAVRVLEEALGMGLTAAGDARDTADAVAAEGAYYLEQVTITEASEDDYEYEE</original>
    <variation>MGVGTKARASHWRRLLSLGATPEEPLLDFK</variation>
    <location>
        <begin position="1"/>
        <end position="61"/>
    </location>
</feature>
<feature type="splice variant" id="VSP_013495" description="In isoform 2." evidence="10">
    <original>VPDVYTQIMLLENENKNLKKDLKHYKQAAD</original>
    <variation>MTILASQKVKKIWQKQFRWPKNRLQILKFC</variation>
    <location>
        <begin position="150"/>
        <end position="179"/>
    </location>
</feature>
<feature type="splice variant" id="VSP_013496" description="In isoform 4." evidence="7 8 9 11">
    <original>DKARE</original>
    <variation>EYVIF</variation>
    <location>
        <begin position="179"/>
        <end position="183"/>
    </location>
</feature>
<feature type="splice variant" id="VSP_013497" description="In isoform 4." evidence="7 8 9 11">
    <location>
        <begin position="184"/>
        <end position="631"/>
    </location>
</feature>
<feature type="splice variant" id="VSP_013498" description="In isoform 3." evidence="8">
    <original>VDHSR</original>
    <variation>GKGCM</variation>
    <location>
        <begin position="278"/>
        <end position="282"/>
    </location>
</feature>
<feature type="splice variant" id="VSP_013499" description="In isoform 3." evidence="8">
    <location>
        <begin position="283"/>
        <end position="631"/>
    </location>
</feature>
<feature type="splice variant" id="VSP_013500" description="In isoform 5." evidence="10">
    <original>DSEFPIDMQPNPNLNVSKESLSPAKFDYKLKNI</original>
    <variation>QWTGNSQTWNKTVPLQDTIGRRQENNSAHQHID</variation>
    <location>
        <begin position="315"/>
        <end position="347"/>
    </location>
</feature>
<feature type="splice variant" id="VSP_013501" description="In isoform 5." evidence="10">
    <location>
        <begin position="348"/>
        <end position="631"/>
    </location>
</feature>
<feature type="splice variant" id="VSP_013502" description="In isoform 2." evidence="10">
    <original>GRVLAQASGNGVIHLLDLKSGEIHKLMGHENEAHTVVFSHDGEILFSGGSDGTVRTWS</original>
    <variation>ENTTYLYRPGAQIYYFQLS</variation>
    <location>
        <begin position="574"/>
        <end position="631"/>
    </location>
</feature>
<feature type="sequence variant" id="VAR_053418" description="In dbSNP:rs10167688.">
    <original>P</original>
    <variation>T</variation>
    <location>
        <position position="324"/>
    </location>
</feature>
<feature type="sequence variant" id="VAR_022366" description="In dbSNP:rs2042791." evidence="5">
    <original>Q</original>
    <variation>H</variation>
    <location>
        <position position="361"/>
    </location>
</feature>
<feature type="sequence variant" id="VAR_022367" description="In dbSNP:rs12623569." evidence="5 6">
    <original>K</original>
    <variation>T</variation>
    <location>
        <position position="425"/>
    </location>
</feature>
<feature type="sequence conflict" description="In Ref. 4; CAG33640." evidence="12" ref="4">
    <original>I</original>
    <variation>T</variation>
    <location>
        <position position="49"/>
    </location>
</feature>
<feature type="sequence conflict" description="In Ref. 4; CAG33640." evidence="12" ref="4">
    <original>P</original>
    <variation>L</variation>
    <location>
        <position position="100"/>
    </location>
</feature>
<feature type="sequence conflict" description="In Ref. 4; CAG33640." evidence="12" ref="4">
    <original>H</original>
    <variation>Q</variation>
    <location>
        <position position="173"/>
    </location>
</feature>
<organism>
    <name type="scientific">Homo sapiens</name>
    <name type="common">Human</name>
    <dbReference type="NCBI Taxonomy" id="9606"/>
    <lineage>
        <taxon>Eukaryota</taxon>
        <taxon>Metazoa</taxon>
        <taxon>Chordata</taxon>
        <taxon>Craniata</taxon>
        <taxon>Vertebrata</taxon>
        <taxon>Euteleostomi</taxon>
        <taxon>Mammalia</taxon>
        <taxon>Eutheria</taxon>
        <taxon>Euarchontoglires</taxon>
        <taxon>Primates</taxon>
        <taxon>Haplorrhini</taxon>
        <taxon>Catarrhini</taxon>
        <taxon>Hominidae</taxon>
        <taxon>Homo</taxon>
    </lineage>
</organism>
<accession>Q8N0X2</accession>
<accession>Q498B7</accession>
<accession>Q658W1</accession>
<accession>Q68DB3</accession>
<accession>Q6I9Z6</accession>
<accession>Q8N9C7</accession>
<accession>Q9H601</accession>
<reference key="1">
    <citation type="journal article" date="2002" name="Am. J. Respir. Cell Mol. Biol.">
        <title>Isolation and expression of the human hPF20 gene orthologous to Chlamydomonas PF20: evaluation as a candidate for axonemal defects of respiratory cilia and sperm flagella.</title>
        <authorList>
            <person name="Pennarun G."/>
            <person name="Bridoux A.-M."/>
            <person name="Escudier E."/>
            <person name="Dastot-Le Moal F."/>
            <person name="Cacheux V."/>
            <person name="Amselem S."/>
            <person name="Duriez B."/>
        </authorList>
    </citation>
    <scope>NUCLEOTIDE SEQUENCE [MRNA] (ISOFORMS 1 AND 4)</scope>
    <scope>ALTERNATIVE SPLICING</scope>
    <scope>VARIANTS HIS-361 AND THR-425</scope>
    <scope>TISSUE SPECIFICITY</scope>
    <source>
        <tissue>Small intestine</tissue>
        <tissue>Testis</tissue>
    </source>
</reference>
<reference key="2">
    <citation type="journal article" date="2002" name="Mol. Cell. Biol.">
        <title>A sperm-associated WD repeat protein orthologous to Chlamydomonas PF20 associates with Spag6, the mammalian orthologue of Chlamydomonas PF16.</title>
        <authorList>
            <person name="Zhang Z."/>
            <person name="Sapiro R."/>
            <person name="Kapfhamer D."/>
            <person name="Bucan M."/>
            <person name="Bray J."/>
            <person name="Chennathukuzhi V."/>
            <person name="McNamara P."/>
            <person name="Curtis A."/>
            <person name="Zhang M."/>
            <person name="Blanchette-Mackie E.J."/>
            <person name="Strauss J.F. III"/>
        </authorList>
    </citation>
    <scope>NUCLEOTIDE SEQUENCE [MRNA] (ISOFORM 1)</scope>
    <scope>VARIANT THR-425</scope>
    <scope>TISSUE SPECIFICITY</scope>
</reference>
<reference key="3">
    <citation type="journal article" date="2004" name="Nat. Genet.">
        <title>Complete sequencing and characterization of 21,243 full-length human cDNAs.</title>
        <authorList>
            <person name="Ota T."/>
            <person name="Suzuki Y."/>
            <person name="Nishikawa T."/>
            <person name="Otsuki T."/>
            <person name="Sugiyama T."/>
            <person name="Irie R."/>
            <person name="Wakamatsu A."/>
            <person name="Hayashi K."/>
            <person name="Sato H."/>
            <person name="Nagai K."/>
            <person name="Kimura K."/>
            <person name="Makita H."/>
            <person name="Sekine M."/>
            <person name="Obayashi M."/>
            <person name="Nishi T."/>
            <person name="Shibahara T."/>
            <person name="Tanaka T."/>
            <person name="Ishii S."/>
            <person name="Yamamoto J."/>
            <person name="Saito K."/>
            <person name="Kawai Y."/>
            <person name="Isono Y."/>
            <person name="Nakamura Y."/>
            <person name="Nagahari K."/>
            <person name="Murakami K."/>
            <person name="Yasuda T."/>
            <person name="Iwayanagi T."/>
            <person name="Wagatsuma M."/>
            <person name="Shiratori A."/>
            <person name="Sudo H."/>
            <person name="Hosoiri T."/>
            <person name="Kaku Y."/>
            <person name="Kodaira H."/>
            <person name="Kondo H."/>
            <person name="Sugawara M."/>
            <person name="Takahashi M."/>
            <person name="Kanda K."/>
            <person name="Yokoi T."/>
            <person name="Furuya T."/>
            <person name="Kikkawa E."/>
            <person name="Omura Y."/>
            <person name="Abe K."/>
            <person name="Kamihara K."/>
            <person name="Katsuta N."/>
            <person name="Sato K."/>
            <person name="Tanikawa M."/>
            <person name="Yamazaki M."/>
            <person name="Ninomiya K."/>
            <person name="Ishibashi T."/>
            <person name="Yamashita H."/>
            <person name="Murakawa K."/>
            <person name="Fujimori K."/>
            <person name="Tanai H."/>
            <person name="Kimata M."/>
            <person name="Watanabe M."/>
            <person name="Hiraoka S."/>
            <person name="Chiba Y."/>
            <person name="Ishida S."/>
            <person name="Ono Y."/>
            <person name="Takiguchi S."/>
            <person name="Watanabe S."/>
            <person name="Yosida M."/>
            <person name="Hotuta T."/>
            <person name="Kusano J."/>
            <person name="Kanehori K."/>
            <person name="Takahashi-Fujii A."/>
            <person name="Hara H."/>
            <person name="Tanase T.-O."/>
            <person name="Nomura Y."/>
            <person name="Togiya S."/>
            <person name="Komai F."/>
            <person name="Hara R."/>
            <person name="Takeuchi K."/>
            <person name="Arita M."/>
            <person name="Imose N."/>
            <person name="Musashino K."/>
            <person name="Yuuki H."/>
            <person name="Oshima A."/>
            <person name="Sasaki N."/>
            <person name="Aotsuka S."/>
            <person name="Yoshikawa Y."/>
            <person name="Matsunawa H."/>
            <person name="Ichihara T."/>
            <person name="Shiohata N."/>
            <person name="Sano S."/>
            <person name="Moriya S."/>
            <person name="Momiyama H."/>
            <person name="Satoh N."/>
            <person name="Takami S."/>
            <person name="Terashima Y."/>
            <person name="Suzuki O."/>
            <person name="Nakagawa S."/>
            <person name="Senoh A."/>
            <person name="Mizoguchi H."/>
            <person name="Goto Y."/>
            <person name="Shimizu F."/>
            <person name="Wakebe H."/>
            <person name="Hishigaki H."/>
            <person name="Watanabe T."/>
            <person name="Sugiyama A."/>
            <person name="Takemoto M."/>
            <person name="Kawakami B."/>
            <person name="Yamazaki M."/>
            <person name="Watanabe K."/>
            <person name="Kumagai A."/>
            <person name="Itakura S."/>
            <person name="Fukuzumi Y."/>
            <person name="Fujimori Y."/>
            <person name="Komiyama M."/>
            <person name="Tashiro H."/>
            <person name="Tanigami A."/>
            <person name="Fujiwara T."/>
            <person name="Ono T."/>
            <person name="Yamada K."/>
            <person name="Fujii Y."/>
            <person name="Ozaki K."/>
            <person name="Hirao M."/>
            <person name="Ohmori Y."/>
            <person name="Kawabata A."/>
            <person name="Hikiji T."/>
            <person name="Kobatake N."/>
            <person name="Inagaki H."/>
            <person name="Ikema Y."/>
            <person name="Okamoto S."/>
            <person name="Okitani R."/>
            <person name="Kawakami T."/>
            <person name="Noguchi S."/>
            <person name="Itoh T."/>
            <person name="Shigeta K."/>
            <person name="Senba T."/>
            <person name="Matsumura K."/>
            <person name="Nakajima Y."/>
            <person name="Mizuno T."/>
            <person name="Morinaga M."/>
            <person name="Sasaki M."/>
            <person name="Togashi T."/>
            <person name="Oyama M."/>
            <person name="Hata H."/>
            <person name="Watanabe M."/>
            <person name="Komatsu T."/>
            <person name="Mizushima-Sugano J."/>
            <person name="Satoh T."/>
            <person name="Shirai Y."/>
            <person name="Takahashi Y."/>
            <person name="Nakagawa K."/>
            <person name="Okumura K."/>
            <person name="Nagase T."/>
            <person name="Nomura N."/>
            <person name="Kikuchi H."/>
            <person name="Masuho Y."/>
            <person name="Yamashita R."/>
            <person name="Nakai K."/>
            <person name="Yada T."/>
            <person name="Nakamura Y."/>
            <person name="Ohara O."/>
            <person name="Isogai T."/>
            <person name="Sugano S."/>
        </authorList>
    </citation>
    <scope>NUCLEOTIDE SEQUENCE [LARGE SCALE MRNA] (ISOFORMS 3 AND 4)</scope>
    <source>
        <tissue>Hippocampus</tissue>
        <tissue>Small intestine</tissue>
    </source>
</reference>
<reference key="4">
    <citation type="submission" date="2004-06" db="EMBL/GenBank/DDBJ databases">
        <title>Cloning of human full open reading frames in Gateway(TM) system entry vector (pDONR201).</title>
        <authorList>
            <person name="Ebert L."/>
            <person name="Schick M."/>
            <person name="Neubert P."/>
            <person name="Schatten R."/>
            <person name="Henze S."/>
            <person name="Korn B."/>
        </authorList>
    </citation>
    <scope>NUCLEOTIDE SEQUENCE [LARGE SCALE MRNA] (ISOFORM 4)</scope>
</reference>
<reference key="5">
    <citation type="journal article" date="2007" name="BMC Genomics">
        <title>The full-ORF clone resource of the German cDNA consortium.</title>
        <authorList>
            <person name="Bechtel S."/>
            <person name="Rosenfelder H."/>
            <person name="Duda A."/>
            <person name="Schmidt C.P."/>
            <person name="Ernst U."/>
            <person name="Wellenreuther R."/>
            <person name="Mehrle A."/>
            <person name="Schuster C."/>
            <person name="Bahr A."/>
            <person name="Bloecker H."/>
            <person name="Heubner D."/>
            <person name="Hoerlein A."/>
            <person name="Michel G."/>
            <person name="Wedler H."/>
            <person name="Koehrer K."/>
            <person name="Ottenwaelder B."/>
            <person name="Poustka A."/>
            <person name="Wiemann S."/>
            <person name="Schupp I."/>
        </authorList>
    </citation>
    <scope>NUCLEOTIDE SEQUENCE [LARGE SCALE MRNA] (ISOFORMS 2 AND 5)</scope>
    <source>
        <tissue>Stomach</tissue>
        <tissue>Testis</tissue>
    </source>
</reference>
<reference key="6">
    <citation type="journal article" date="2004" name="Genome Res.">
        <title>The status, quality, and expansion of the NIH full-length cDNA project: the Mammalian Gene Collection (MGC).</title>
        <authorList>
            <consortium name="The MGC Project Team"/>
        </authorList>
    </citation>
    <scope>NUCLEOTIDE SEQUENCE [LARGE SCALE MRNA] (ISOFORM 4)</scope>
    <source>
        <tissue>Brain</tissue>
        <tissue>Pancreas</tissue>
    </source>
</reference>
<comment type="function">
    <text evidence="2">Necessary for sperm flagellar function. Plays a role in motile ciliogenesis. May help to recruit STK36 to the cilium or apical surface of the cell to initiate subsequent steps of construction of the central pair apparatus of motile cilia (By similarity).</text>
</comment>
<comment type="subunit">
    <text evidence="2">Interacts with SPAG6 and STK36.</text>
</comment>
<comment type="interaction">
    <interactant intactId="EBI-11946259">
        <id>Q8N0X2-4</id>
    </interactant>
    <interactant intactId="EBI-2371151">
        <id>Q9Y2T2</id>
        <label>AP3M1</label>
    </interactant>
    <organismsDiffer>false</organismsDiffer>
    <experiments>3</experiments>
</comment>
<comment type="interaction">
    <interactant intactId="EBI-11946259">
        <id>Q8N0X2-4</id>
    </interactant>
    <interactant intactId="EBI-948266">
        <id>O14901</id>
        <label>KLF11</label>
    </interactant>
    <organismsDiffer>false</organismsDiffer>
    <experiments>3</experiments>
</comment>
<comment type="interaction">
    <interactant intactId="EBI-11946259">
        <id>Q8N0X2-4</id>
    </interactant>
    <interactant intactId="EBI-5325394">
        <id>Q9BYD6</id>
        <label>MRPL1</label>
    </interactant>
    <organismsDiffer>false</organismsDiffer>
    <experiments>3</experiments>
</comment>
<comment type="interaction">
    <interactant intactId="EBI-11946259">
        <id>Q8N0X2-4</id>
    </interactant>
    <interactant intactId="EBI-11980193">
        <id>Q14119</id>
        <label>VEZF1</label>
    </interactant>
    <organismsDiffer>false</organismsDiffer>
    <experiments>3</experiments>
</comment>
<comment type="subcellular location">
    <subcellularLocation>
        <location evidence="2">Cytoplasm</location>
    </subcellularLocation>
    <subcellularLocation>
        <location evidence="2">Cytoplasm</location>
        <location evidence="2">Cytoskeleton</location>
        <location evidence="2">Flagellum axoneme</location>
    </subcellularLocation>
    <subcellularLocation>
        <location evidence="2">Cytoplasm</location>
        <location evidence="2">Cytoskeleton</location>
        <location evidence="2">Cilium axoneme</location>
    </subcellularLocation>
    <subcellularLocation>
        <location evidence="2">Cell projection</location>
        <location evidence="2">Cilium</location>
        <location evidence="2">Flagellum</location>
    </subcellularLocation>
    <text evidence="2">Detected on the sperm flagellum axoneme. Detected in the central apparatus of the axoneme. Colocalizes with SPAG6 on microtubules (By similarity).</text>
</comment>
<comment type="alternative products">
    <event type="alternative splicing"/>
    <isoform>
        <id>Q8N0X2-1</id>
        <name>1</name>
        <name>PF20 variant 1a</name>
        <sequence type="displayed"/>
    </isoform>
    <isoform>
        <id>Q8N0X2-2</id>
        <name>2</name>
        <sequence type="described" ref="VSP_013494 VSP_013495 VSP_013502"/>
    </isoform>
    <isoform>
        <id>Q8N0X2-3</id>
        <name>3</name>
        <sequence type="described" ref="VSP_013493 VSP_013498 VSP_013499"/>
    </isoform>
    <isoform>
        <id>Q8N0X2-4</id>
        <name>4</name>
        <name>PF20 variant 2a</name>
        <sequence type="described" ref="VSP_013496 VSP_013497"/>
    </isoform>
    <isoform>
        <id>Q8N0X2-5</id>
        <name>5</name>
        <sequence type="described" ref="VSP_013500 VSP_013501"/>
    </isoform>
</comment>
<comment type="tissue specificity">
    <text evidence="5 6">Isoform 1 is detected in testis. Isoform 4 is detected in testis and brain, and at lower levels in kidney, heart, pancreas, thyroid, ovary, adrenal gland, spinal cord, trachea and liver.</text>
</comment>
<comment type="PTM">
    <text evidence="1">Phosphorylated by TSSK2.</text>
</comment>
<dbReference type="EMBL" id="AF310672">
    <property type="protein sequence ID" value="AAM63956.1"/>
    <property type="molecule type" value="mRNA"/>
</dbReference>
<dbReference type="EMBL" id="AF426740">
    <property type="protein sequence ID" value="AAN63530.1"/>
    <property type="molecule type" value="mRNA"/>
</dbReference>
<dbReference type="EMBL" id="AF490390">
    <property type="protein sequence ID" value="AAM97147.1"/>
    <property type="molecule type" value="mRNA"/>
</dbReference>
<dbReference type="EMBL" id="AK026377">
    <property type="protein sequence ID" value="BAB15466.1"/>
    <property type="molecule type" value="mRNA"/>
</dbReference>
<dbReference type="EMBL" id="AK095036">
    <property type="protein sequence ID" value="BAC04481.1"/>
    <property type="molecule type" value="mRNA"/>
</dbReference>
<dbReference type="EMBL" id="CR457359">
    <property type="protein sequence ID" value="CAG33640.1"/>
    <property type="molecule type" value="mRNA"/>
</dbReference>
<dbReference type="EMBL" id="CR749477">
    <property type="protein sequence ID" value="CAH18307.1"/>
    <property type="molecule type" value="mRNA"/>
</dbReference>
<dbReference type="EMBL" id="AL832962">
    <property type="protein sequence ID" value="CAH56274.1"/>
    <property type="molecule type" value="mRNA"/>
</dbReference>
<dbReference type="EMBL" id="BC009614">
    <property type="protein sequence ID" value="AAH09614.1"/>
    <property type="molecule type" value="mRNA"/>
</dbReference>
<dbReference type="EMBL" id="BC067756">
    <property type="protein sequence ID" value="AAH67756.1"/>
    <property type="molecule type" value="mRNA"/>
</dbReference>
<dbReference type="EMBL" id="BC100282">
    <property type="protein sequence ID" value="AAI00283.1"/>
    <property type="molecule type" value="mRNA"/>
</dbReference>
<dbReference type="CCDS" id="CCDS2396.1">
    <molecule id="Q8N0X2-1"/>
</dbReference>
<dbReference type="CCDS" id="CCDS46508.1">
    <molecule id="Q8N0X2-4"/>
</dbReference>
<dbReference type="RefSeq" id="NP_001020607.1">
    <molecule id="Q8N0X2-4"/>
    <property type="nucleotide sequence ID" value="NM_001025436.3"/>
</dbReference>
<dbReference type="RefSeq" id="NP_078808.3">
    <molecule id="Q8N0X2-1"/>
    <property type="nucleotide sequence ID" value="NM_024532.4"/>
</dbReference>
<dbReference type="SMR" id="Q8N0X2"/>
<dbReference type="BioGRID" id="122726">
    <property type="interactions" value="7"/>
</dbReference>
<dbReference type="FunCoup" id="Q8N0X2">
    <property type="interactions" value="76"/>
</dbReference>
<dbReference type="IntAct" id="Q8N0X2">
    <property type="interactions" value="8"/>
</dbReference>
<dbReference type="STRING" id="9606.ENSP00000332592"/>
<dbReference type="GlyGen" id="Q8N0X2">
    <property type="glycosylation" value="2 sites, 1 O-linked glycan (2 sites)"/>
</dbReference>
<dbReference type="iPTMnet" id="Q8N0X2"/>
<dbReference type="PhosphoSitePlus" id="Q8N0X2"/>
<dbReference type="BioMuta" id="SPAG16"/>
<dbReference type="DMDM" id="146329993"/>
<dbReference type="jPOST" id="Q8N0X2"/>
<dbReference type="MassIVE" id="Q8N0X2"/>
<dbReference type="PaxDb" id="9606-ENSP00000332592"/>
<dbReference type="PeptideAtlas" id="Q8N0X2"/>
<dbReference type="ProteomicsDB" id="71478">
    <molecule id="Q8N0X2-1"/>
</dbReference>
<dbReference type="ProteomicsDB" id="71479">
    <molecule id="Q8N0X2-2"/>
</dbReference>
<dbReference type="ProteomicsDB" id="71480">
    <molecule id="Q8N0X2-3"/>
</dbReference>
<dbReference type="ProteomicsDB" id="71481">
    <molecule id="Q8N0X2-4"/>
</dbReference>
<dbReference type="ProteomicsDB" id="71482">
    <molecule id="Q8N0X2-5"/>
</dbReference>
<dbReference type="Antibodypedia" id="47659">
    <property type="antibodies" value="211 antibodies from 28 providers"/>
</dbReference>
<dbReference type="DNASU" id="79582"/>
<dbReference type="Ensembl" id="ENST00000331683.10">
    <molecule id="Q8N0X2-1"/>
    <property type="protein sequence ID" value="ENSP00000332592.5"/>
    <property type="gene ID" value="ENSG00000144451.20"/>
</dbReference>
<dbReference type="Ensembl" id="ENST00000432529.6">
    <molecule id="Q8N0X2-4"/>
    <property type="protein sequence ID" value="ENSP00000415079.2"/>
    <property type="gene ID" value="ENSG00000144451.20"/>
</dbReference>
<dbReference type="GeneID" id="79582"/>
<dbReference type="KEGG" id="hsa:79582"/>
<dbReference type="MANE-Select" id="ENST00000331683.10">
    <property type="protein sequence ID" value="ENSP00000332592.5"/>
    <property type="RefSeq nucleotide sequence ID" value="NM_024532.5"/>
    <property type="RefSeq protein sequence ID" value="NP_078808.3"/>
</dbReference>
<dbReference type="UCSC" id="uc002veo.5">
    <molecule id="Q8N0X2-1"/>
    <property type="organism name" value="human"/>
</dbReference>
<dbReference type="AGR" id="HGNC:23225"/>
<dbReference type="CTD" id="79582"/>
<dbReference type="DisGeNET" id="79582"/>
<dbReference type="GeneCards" id="SPAG16"/>
<dbReference type="HGNC" id="HGNC:23225">
    <property type="gene designation" value="SPAG16"/>
</dbReference>
<dbReference type="HPA" id="ENSG00000144451">
    <property type="expression patterns" value="Low tissue specificity"/>
</dbReference>
<dbReference type="MIM" id="612173">
    <property type="type" value="gene"/>
</dbReference>
<dbReference type="neXtProt" id="NX_Q8N0X2"/>
<dbReference type="OpenTargets" id="ENSG00000144451"/>
<dbReference type="PharmGKB" id="PA134887898"/>
<dbReference type="VEuPathDB" id="HostDB:ENSG00000144451"/>
<dbReference type="eggNOG" id="KOG0295">
    <property type="taxonomic scope" value="Eukaryota"/>
</dbReference>
<dbReference type="GeneTree" id="ENSGT00940000155053"/>
<dbReference type="HOGENOM" id="CLU_000288_57_18_1"/>
<dbReference type="InParanoid" id="Q8N0X2"/>
<dbReference type="OMA" id="VSDDETW"/>
<dbReference type="OrthoDB" id="538223at2759"/>
<dbReference type="PAN-GO" id="Q8N0X2">
    <property type="GO annotations" value="2 GO annotations based on evolutionary models"/>
</dbReference>
<dbReference type="PhylomeDB" id="Q8N0X2"/>
<dbReference type="TreeFam" id="TF351566"/>
<dbReference type="PathwayCommons" id="Q8N0X2"/>
<dbReference type="SignaLink" id="Q8N0X2"/>
<dbReference type="BioGRID-ORCS" id="79582">
    <property type="hits" value="6 hits in 1152 CRISPR screens"/>
</dbReference>
<dbReference type="ChiTaRS" id="SPAG16">
    <property type="organism name" value="human"/>
</dbReference>
<dbReference type="GenomeRNAi" id="79582"/>
<dbReference type="Pharos" id="Q8N0X2">
    <property type="development level" value="Tbio"/>
</dbReference>
<dbReference type="PRO" id="PR:Q8N0X2"/>
<dbReference type="Proteomes" id="UP000005640">
    <property type="component" value="Chromosome 2"/>
</dbReference>
<dbReference type="RNAct" id="Q8N0X2">
    <property type="molecule type" value="protein"/>
</dbReference>
<dbReference type="Bgee" id="ENSG00000144451">
    <property type="expression patterns" value="Expressed in bronchial epithelial cell and 207 other cell types or tissues"/>
</dbReference>
<dbReference type="ExpressionAtlas" id="Q8N0X2">
    <property type="expression patterns" value="baseline and differential"/>
</dbReference>
<dbReference type="GO" id="GO:1990716">
    <property type="term" value="C:axonemal central apparatus"/>
    <property type="evidence" value="ECO:0000318"/>
    <property type="project" value="GO_Central"/>
</dbReference>
<dbReference type="GO" id="GO:0005930">
    <property type="term" value="C:axoneme"/>
    <property type="evidence" value="ECO:0000250"/>
    <property type="project" value="UniProtKB"/>
</dbReference>
<dbReference type="GO" id="GO:0005576">
    <property type="term" value="C:extracellular region"/>
    <property type="evidence" value="ECO:0007669"/>
    <property type="project" value="GOC"/>
</dbReference>
<dbReference type="GO" id="GO:0036126">
    <property type="term" value="C:sperm flagellum"/>
    <property type="evidence" value="ECO:0007669"/>
    <property type="project" value="Ensembl"/>
</dbReference>
<dbReference type="GO" id="GO:0035082">
    <property type="term" value="P:axoneme assembly"/>
    <property type="evidence" value="ECO:0000315"/>
    <property type="project" value="GO_Central"/>
</dbReference>
<dbReference type="GO" id="GO:0090660">
    <property type="term" value="P:cerebrospinal fluid circulation"/>
    <property type="evidence" value="ECO:0007669"/>
    <property type="project" value="Ensembl"/>
</dbReference>
<dbReference type="GO" id="GO:0060271">
    <property type="term" value="P:cilium assembly"/>
    <property type="evidence" value="ECO:0000250"/>
    <property type="project" value="UniProtKB"/>
</dbReference>
<dbReference type="GO" id="GO:0120197">
    <property type="term" value="P:mucociliary clearance"/>
    <property type="evidence" value="ECO:0007669"/>
    <property type="project" value="Ensembl"/>
</dbReference>
<dbReference type="GO" id="GO:0007288">
    <property type="term" value="P:sperm axoneme assembly"/>
    <property type="evidence" value="ECO:0007669"/>
    <property type="project" value="Ensembl"/>
</dbReference>
<dbReference type="CDD" id="cd00200">
    <property type="entry name" value="WD40"/>
    <property type="match status" value="1"/>
</dbReference>
<dbReference type="FunFam" id="2.130.10.10:FF:000993">
    <property type="entry name" value="Sperm associated antigen 16"/>
    <property type="match status" value="1"/>
</dbReference>
<dbReference type="FunFam" id="2.130.10.10:FF:001241">
    <property type="entry name" value="Sperm-associated antigen 16 protein"/>
    <property type="match status" value="1"/>
</dbReference>
<dbReference type="FunFam" id="2.130.10.10:FF:000934">
    <property type="entry name" value="sperm-associated antigen 16 protein"/>
    <property type="match status" value="1"/>
</dbReference>
<dbReference type="Gene3D" id="2.130.10.10">
    <property type="entry name" value="YVTN repeat-like/Quinoprotein amine dehydrogenase"/>
    <property type="match status" value="3"/>
</dbReference>
<dbReference type="InterPro" id="IPR020472">
    <property type="entry name" value="G-protein_beta_WD-40_rep"/>
</dbReference>
<dbReference type="InterPro" id="IPR050995">
    <property type="entry name" value="WD-F-box_domain-protein"/>
</dbReference>
<dbReference type="InterPro" id="IPR015943">
    <property type="entry name" value="WD40/YVTN_repeat-like_dom_sf"/>
</dbReference>
<dbReference type="InterPro" id="IPR019775">
    <property type="entry name" value="WD40_repeat_CS"/>
</dbReference>
<dbReference type="InterPro" id="IPR036322">
    <property type="entry name" value="WD40_repeat_dom_sf"/>
</dbReference>
<dbReference type="InterPro" id="IPR001680">
    <property type="entry name" value="WD40_rpt"/>
</dbReference>
<dbReference type="PANTHER" id="PTHR14604:SF3">
    <property type="entry name" value="SPERM-ASSOCIATED ANTIGEN 16 PROTEIN"/>
    <property type="match status" value="1"/>
</dbReference>
<dbReference type="PANTHER" id="PTHR14604">
    <property type="entry name" value="WD40 REPEAT PF20"/>
    <property type="match status" value="1"/>
</dbReference>
<dbReference type="Pfam" id="PF00400">
    <property type="entry name" value="WD40"/>
    <property type="match status" value="6"/>
</dbReference>
<dbReference type="PRINTS" id="PR00320">
    <property type="entry name" value="GPROTEINBRPT"/>
</dbReference>
<dbReference type="SMART" id="SM00320">
    <property type="entry name" value="WD40"/>
    <property type="match status" value="7"/>
</dbReference>
<dbReference type="SUPFAM" id="SSF50978">
    <property type="entry name" value="WD40 repeat-like"/>
    <property type="match status" value="1"/>
</dbReference>
<dbReference type="PROSITE" id="PS00678">
    <property type="entry name" value="WD_REPEATS_1"/>
    <property type="match status" value="3"/>
</dbReference>
<dbReference type="PROSITE" id="PS50082">
    <property type="entry name" value="WD_REPEATS_2"/>
    <property type="match status" value="5"/>
</dbReference>
<dbReference type="PROSITE" id="PS50294">
    <property type="entry name" value="WD_REPEATS_REGION"/>
    <property type="match status" value="1"/>
</dbReference>
<evidence type="ECO:0000250" key="1"/>
<evidence type="ECO:0000250" key="2">
    <source>
        <dbReference type="UniProtKB" id="Q8K450"/>
    </source>
</evidence>
<evidence type="ECO:0000255" key="3"/>
<evidence type="ECO:0000256" key="4">
    <source>
        <dbReference type="SAM" id="MobiDB-lite"/>
    </source>
</evidence>
<evidence type="ECO:0000269" key="5">
    <source>
    </source>
</evidence>
<evidence type="ECO:0000269" key="6">
    <source>
    </source>
</evidence>
<evidence type="ECO:0000303" key="7">
    <source>
    </source>
</evidence>
<evidence type="ECO:0000303" key="8">
    <source>
    </source>
</evidence>
<evidence type="ECO:0000303" key="9">
    <source>
    </source>
</evidence>
<evidence type="ECO:0000303" key="10">
    <source>
    </source>
</evidence>
<evidence type="ECO:0000303" key="11">
    <source ref="4"/>
</evidence>
<evidence type="ECO:0000305" key="12"/>
<protein>
    <recommendedName>
        <fullName>Sperm-associated antigen 16 protein</fullName>
    </recommendedName>
    <alternativeName>
        <fullName>Pf20 protein homolog</fullName>
    </alternativeName>
</protein>
<name>SPG16_HUMAN</name>